<keyword id="KW-0004">4Fe-4S</keyword>
<keyword id="KW-0067">ATP-binding</keyword>
<keyword id="KW-0963">Cytoplasm</keyword>
<keyword id="KW-0408">Iron</keyword>
<keyword id="KW-0411">Iron-sulfur</keyword>
<keyword id="KW-0479">Metal-binding</keyword>
<keyword id="KW-0547">Nucleotide-binding</keyword>
<keyword id="KW-0539">Nucleus</keyword>
<keyword id="KW-1185">Reference proteome</keyword>
<protein>
    <recommendedName>
        <fullName evidence="1">Cytosolic Fe-S cluster assembly factor NBP35</fullName>
    </recommendedName>
    <alternativeName>
        <fullName evidence="1">Nucleotide-binding protein 35</fullName>
    </alternativeName>
</protein>
<accession>Q6CMN0</accession>
<evidence type="ECO:0000255" key="1">
    <source>
        <dbReference type="HAMAP-Rule" id="MF_03038"/>
    </source>
</evidence>
<evidence type="ECO:0000256" key="2">
    <source>
        <dbReference type="SAM" id="MobiDB-lite"/>
    </source>
</evidence>
<feature type="chain" id="PRO_0000278899" description="Cytosolic Fe-S cluster assembly factor NBP35">
    <location>
        <begin position="1"/>
        <end position="326"/>
    </location>
</feature>
<feature type="region of interest" description="Disordered" evidence="2">
    <location>
        <begin position="1"/>
        <end position="38"/>
    </location>
</feature>
<feature type="compositionally biased region" description="Basic and acidic residues" evidence="2">
    <location>
        <begin position="16"/>
        <end position="26"/>
    </location>
</feature>
<feature type="binding site" evidence="1">
    <location>
        <position position="25"/>
    </location>
    <ligand>
        <name>[4Fe-4S] cluster</name>
        <dbReference type="ChEBI" id="CHEBI:49883"/>
        <label>1</label>
    </ligand>
</feature>
<feature type="binding site" evidence="1">
    <location>
        <position position="39"/>
    </location>
    <ligand>
        <name>[4Fe-4S] cluster</name>
        <dbReference type="ChEBI" id="CHEBI:49883"/>
        <label>1</label>
    </ligand>
</feature>
<feature type="binding site" evidence="1">
    <location>
        <position position="42"/>
    </location>
    <ligand>
        <name>[4Fe-4S] cluster</name>
        <dbReference type="ChEBI" id="CHEBI:49883"/>
        <label>1</label>
    </ligand>
</feature>
<feature type="binding site" evidence="1">
    <location>
        <position position="48"/>
    </location>
    <ligand>
        <name>[4Fe-4S] cluster</name>
        <dbReference type="ChEBI" id="CHEBI:49883"/>
        <label>1</label>
    </ligand>
</feature>
<feature type="binding site" evidence="1">
    <location>
        <begin position="78"/>
        <end position="85"/>
    </location>
    <ligand>
        <name>ATP</name>
        <dbReference type="ChEBI" id="CHEBI:30616"/>
    </ligand>
</feature>
<feature type="binding site" evidence="1">
    <location>
        <position position="251"/>
    </location>
    <ligand>
        <name>[4Fe-4S] cluster</name>
        <dbReference type="ChEBI" id="CHEBI:49883"/>
        <label>2</label>
        <note>ligand shared with heterodimeric partner</note>
    </ligand>
</feature>
<feature type="binding site" evidence="1">
    <location>
        <position position="254"/>
    </location>
    <ligand>
        <name>[4Fe-4S] cluster</name>
        <dbReference type="ChEBI" id="CHEBI:49883"/>
        <label>2</label>
        <note>ligand shared with heterodimeric partner</note>
    </ligand>
</feature>
<gene>
    <name evidence="1" type="primary">NBP35</name>
    <name type="ordered locus">KLLA0E19074g</name>
</gene>
<name>NBP35_KLULA</name>
<organism>
    <name type="scientific">Kluyveromyces lactis (strain ATCC 8585 / CBS 2359 / DSM 70799 / NBRC 1267 / NRRL Y-1140 / WM37)</name>
    <name type="common">Yeast</name>
    <name type="synonym">Candida sphaerica</name>
    <dbReference type="NCBI Taxonomy" id="284590"/>
    <lineage>
        <taxon>Eukaryota</taxon>
        <taxon>Fungi</taxon>
        <taxon>Dikarya</taxon>
        <taxon>Ascomycota</taxon>
        <taxon>Saccharomycotina</taxon>
        <taxon>Saccharomycetes</taxon>
        <taxon>Saccharomycetales</taxon>
        <taxon>Saccharomycetaceae</taxon>
        <taxon>Kluyveromyces</taxon>
    </lineage>
</organism>
<comment type="function">
    <text evidence="1">Component of the cytosolic iron-sulfur (Fe/S) protein assembly (CIA) machinery. Required for maturation of extramitochondrial Fe-S proteins. The NBP35-CFD1 heterotetramer forms a Fe-S scaffold complex, mediating the de novo assembly of an Fe-S cluster and its transfer to target apoproteins. Required for biogenesis and export of both ribosomal subunits, which may reflect a role in assembly of the Fe/S clusters in RLI1, a protein which performs rRNA processing and ribosome export.</text>
</comment>
<comment type="cofactor">
    <cofactor evidence="1">
        <name>[4Fe-4S] cluster</name>
        <dbReference type="ChEBI" id="CHEBI:49883"/>
    </cofactor>
    <text evidence="1">Binds 4 [4Fe-4S] clusters per heterotetramer. Contains two stable clusters in the N-termini of NBP35 and two labile, bridging clusters between subunits of the NBP35-CFD1 heterotetramer.</text>
</comment>
<comment type="subunit">
    <text evidence="1">Heterotetramer of 2 NBP35 and 2 CFD1 chains.</text>
</comment>
<comment type="subcellular location">
    <subcellularLocation>
        <location evidence="1">Cytoplasm</location>
    </subcellularLocation>
    <subcellularLocation>
        <location evidence="1">Nucleus</location>
    </subcellularLocation>
</comment>
<comment type="similarity">
    <text evidence="1">Belongs to the Mrp/NBP35 ATP-binding proteins family. NUBP1/NBP35 subfamily.</text>
</comment>
<reference key="1">
    <citation type="journal article" date="2004" name="Nature">
        <title>Genome evolution in yeasts.</title>
        <authorList>
            <person name="Dujon B."/>
            <person name="Sherman D."/>
            <person name="Fischer G."/>
            <person name="Durrens P."/>
            <person name="Casaregola S."/>
            <person name="Lafontaine I."/>
            <person name="de Montigny J."/>
            <person name="Marck C."/>
            <person name="Neuveglise C."/>
            <person name="Talla E."/>
            <person name="Goffard N."/>
            <person name="Frangeul L."/>
            <person name="Aigle M."/>
            <person name="Anthouard V."/>
            <person name="Babour A."/>
            <person name="Barbe V."/>
            <person name="Barnay S."/>
            <person name="Blanchin S."/>
            <person name="Beckerich J.-M."/>
            <person name="Beyne E."/>
            <person name="Bleykasten C."/>
            <person name="Boisrame A."/>
            <person name="Boyer J."/>
            <person name="Cattolico L."/>
            <person name="Confanioleri F."/>
            <person name="de Daruvar A."/>
            <person name="Despons L."/>
            <person name="Fabre E."/>
            <person name="Fairhead C."/>
            <person name="Ferry-Dumazet H."/>
            <person name="Groppi A."/>
            <person name="Hantraye F."/>
            <person name="Hennequin C."/>
            <person name="Jauniaux N."/>
            <person name="Joyet P."/>
            <person name="Kachouri R."/>
            <person name="Kerrest A."/>
            <person name="Koszul R."/>
            <person name="Lemaire M."/>
            <person name="Lesur I."/>
            <person name="Ma L."/>
            <person name="Muller H."/>
            <person name="Nicaud J.-M."/>
            <person name="Nikolski M."/>
            <person name="Oztas S."/>
            <person name="Ozier-Kalogeropoulos O."/>
            <person name="Pellenz S."/>
            <person name="Potier S."/>
            <person name="Richard G.-F."/>
            <person name="Straub M.-L."/>
            <person name="Suleau A."/>
            <person name="Swennen D."/>
            <person name="Tekaia F."/>
            <person name="Wesolowski-Louvel M."/>
            <person name="Westhof E."/>
            <person name="Wirth B."/>
            <person name="Zeniou-Meyer M."/>
            <person name="Zivanovic Y."/>
            <person name="Bolotin-Fukuhara M."/>
            <person name="Thierry A."/>
            <person name="Bouchier C."/>
            <person name="Caudron B."/>
            <person name="Scarpelli C."/>
            <person name="Gaillardin C."/>
            <person name="Weissenbach J."/>
            <person name="Wincker P."/>
            <person name="Souciet J.-L."/>
        </authorList>
    </citation>
    <scope>NUCLEOTIDE SEQUENCE [LARGE SCALE GENOMIC DNA]</scope>
    <source>
        <strain>ATCC 8585 / CBS 2359 / DSM 70799 / NBRC 1267 / NRRL Y-1140 / WM37</strain>
    </source>
</reference>
<dbReference type="EMBL" id="CR382125">
    <property type="protein sequence ID" value="CAG99896.1"/>
    <property type="molecule type" value="Genomic_DNA"/>
</dbReference>
<dbReference type="RefSeq" id="XP_454809.1">
    <property type="nucleotide sequence ID" value="XM_454809.1"/>
</dbReference>
<dbReference type="SMR" id="Q6CMN0"/>
<dbReference type="FunCoup" id="Q6CMN0">
    <property type="interactions" value="608"/>
</dbReference>
<dbReference type="STRING" id="284590.Q6CMN0"/>
<dbReference type="PaxDb" id="284590-Q6CMN0"/>
<dbReference type="KEGG" id="kla:KLLA0_E18987g"/>
<dbReference type="eggNOG" id="KOG3022">
    <property type="taxonomic scope" value="Eukaryota"/>
</dbReference>
<dbReference type="HOGENOM" id="CLU_024839_0_1_1"/>
<dbReference type="InParanoid" id="Q6CMN0"/>
<dbReference type="OMA" id="VSGCPMR"/>
<dbReference type="Proteomes" id="UP000000598">
    <property type="component" value="Chromosome E"/>
</dbReference>
<dbReference type="GO" id="GO:0005829">
    <property type="term" value="C:cytosol"/>
    <property type="evidence" value="ECO:0007669"/>
    <property type="project" value="TreeGrafter"/>
</dbReference>
<dbReference type="GO" id="GO:0005634">
    <property type="term" value="C:nucleus"/>
    <property type="evidence" value="ECO:0007669"/>
    <property type="project" value="UniProtKB-SubCell"/>
</dbReference>
<dbReference type="GO" id="GO:0051539">
    <property type="term" value="F:4 iron, 4 sulfur cluster binding"/>
    <property type="evidence" value="ECO:0007669"/>
    <property type="project" value="UniProtKB-UniRule"/>
</dbReference>
<dbReference type="GO" id="GO:0005524">
    <property type="term" value="F:ATP binding"/>
    <property type="evidence" value="ECO:0007669"/>
    <property type="project" value="UniProtKB-KW"/>
</dbReference>
<dbReference type="GO" id="GO:0140663">
    <property type="term" value="F:ATP-dependent FeS chaperone activity"/>
    <property type="evidence" value="ECO:0007669"/>
    <property type="project" value="InterPro"/>
</dbReference>
<dbReference type="GO" id="GO:0046872">
    <property type="term" value="F:metal ion binding"/>
    <property type="evidence" value="ECO:0007669"/>
    <property type="project" value="UniProtKB-KW"/>
</dbReference>
<dbReference type="GO" id="GO:0016226">
    <property type="term" value="P:iron-sulfur cluster assembly"/>
    <property type="evidence" value="ECO:0007669"/>
    <property type="project" value="UniProtKB-UniRule"/>
</dbReference>
<dbReference type="CDD" id="cd02037">
    <property type="entry name" value="Mrp_NBP35"/>
    <property type="match status" value="1"/>
</dbReference>
<dbReference type="FunFam" id="3.40.50.300:FF:000427">
    <property type="entry name" value="Cytosolic Fe-S cluster assembly factor NUBP1"/>
    <property type="match status" value="1"/>
</dbReference>
<dbReference type="Gene3D" id="3.40.50.300">
    <property type="entry name" value="P-loop containing nucleotide triphosphate hydrolases"/>
    <property type="match status" value="1"/>
</dbReference>
<dbReference type="HAMAP" id="MF_02040">
    <property type="entry name" value="Mrp_NBP35"/>
    <property type="match status" value="1"/>
</dbReference>
<dbReference type="HAMAP" id="MF_03038">
    <property type="entry name" value="NUBP1"/>
    <property type="match status" value="1"/>
</dbReference>
<dbReference type="InterPro" id="IPR000808">
    <property type="entry name" value="Mrp-like_CS"/>
</dbReference>
<dbReference type="InterPro" id="IPR019591">
    <property type="entry name" value="Mrp/NBP35_ATP-bd"/>
</dbReference>
<dbReference type="InterPro" id="IPR028601">
    <property type="entry name" value="NUBP1/Nbp35"/>
</dbReference>
<dbReference type="InterPro" id="IPR027417">
    <property type="entry name" value="P-loop_NTPase"/>
</dbReference>
<dbReference type="InterPro" id="IPR033756">
    <property type="entry name" value="YlxH/NBP35"/>
</dbReference>
<dbReference type="PANTHER" id="PTHR23264:SF35">
    <property type="entry name" value="CYTOSOLIC FE-S CLUSTER ASSEMBLY FACTOR NUBP1"/>
    <property type="match status" value="1"/>
</dbReference>
<dbReference type="PANTHER" id="PTHR23264">
    <property type="entry name" value="NUCLEOTIDE-BINDING PROTEIN NBP35 YEAST -RELATED"/>
    <property type="match status" value="1"/>
</dbReference>
<dbReference type="Pfam" id="PF10609">
    <property type="entry name" value="ParA"/>
    <property type="match status" value="1"/>
</dbReference>
<dbReference type="SUPFAM" id="SSF52540">
    <property type="entry name" value="P-loop containing nucleoside triphosphate hydrolases"/>
    <property type="match status" value="1"/>
</dbReference>
<dbReference type="PROSITE" id="PS01215">
    <property type="entry name" value="MRP"/>
    <property type="match status" value="1"/>
</dbReference>
<sequence length="326" mass="35300">MTEIANGQQILPPDYTLKEPEPEHCPGPESENAGKGDSCQGCANKEVCESLPKGPDPDLPLIKENLANIKHKILILSGKGGVGKSTFTTMLSWALSADEDLQVGAMDLDICGPSLPHMLGCVRETIHESNTGWTPVYVTDNLATMSIQYMLPDTDSAIIWRGSKKNALIKKFLKDVDWDYLDYLLIDTPPGTSDEHISINNYLKESQIDGALIVTTPQEVALLDVRKEINFCRKAGINILGLVENMSGFVCPNCKGESKIFKATTGGGKALCNELGIDFLGSVPLDPRIGRCCETGESFLDEFPDSPASTAILEVIESLRDAVGDV</sequence>
<proteinExistence type="inferred from homology"/>